<feature type="chain" id="PRO_0000308273" description="Potassium voltage-gated channel subfamily A member 7">
    <location>
        <begin position="1"/>
        <end position="456"/>
    </location>
</feature>
<feature type="transmembrane region" description="Helical; Name=Segment S1" evidence="3">
    <location>
        <begin position="144"/>
        <end position="164"/>
    </location>
</feature>
<feature type="transmembrane region" description="Helical; Name=Segment S2" evidence="3">
    <location>
        <begin position="209"/>
        <end position="229"/>
    </location>
</feature>
<feature type="transmembrane region" description="Helical; Name=Segment S3" evidence="3">
    <location>
        <begin position="241"/>
        <end position="261"/>
    </location>
</feature>
<feature type="transmembrane region" description="Helical; Voltage-sensor; Name=Segment S4" evidence="3">
    <location>
        <begin position="276"/>
        <end position="295"/>
    </location>
</feature>
<feature type="transmembrane region" description="Helical; Name=Segment S5" evidence="3">
    <location>
        <begin position="312"/>
        <end position="332"/>
    </location>
</feature>
<feature type="transmembrane region" description="Helical; Name=Segment S6" evidence="3">
    <location>
        <begin position="373"/>
        <end position="393"/>
    </location>
</feature>
<feature type="short sequence motif" description="Selectivity filter" evidence="1">
    <location>
        <begin position="358"/>
        <end position="363"/>
    </location>
</feature>
<feature type="lipid moiety-binding region" description="S-palmitoyl cysteine" evidence="3">
    <location>
        <position position="231"/>
    </location>
</feature>
<feature type="glycosylation site" description="N-linked (GlcNAc...) asparagine" evidence="3">
    <location>
        <position position="191"/>
    </location>
</feature>
<feature type="sequence variant" id="VAR_036776" description="In dbSNP:rs1611775." evidence="5 6">
    <original>P</original>
    <variation>R</variation>
    <location>
        <position position="189"/>
    </location>
</feature>
<feature type="sequence variant" id="VAR_036777" description="In dbSNP:rs1017219." evidence="4 5">
    <original>M</original>
    <variation>T</variation>
    <location>
        <position position="418"/>
    </location>
</feature>
<feature type="sequence conflict" description="In Ref. 3; AAX11186." evidence="7" ref="3">
    <original>Y</original>
    <variation>H</variation>
    <location>
        <position position="71"/>
    </location>
</feature>
<feature type="sequence conflict" description="In Ref. 3; AAX11186." evidence="7" ref="3">
    <original>A</original>
    <variation>V</variation>
    <location>
        <position position="180"/>
    </location>
</feature>
<proteinExistence type="evidence at protein level"/>
<keyword id="KW-0325">Glycoprotein</keyword>
<keyword id="KW-0407">Ion channel</keyword>
<keyword id="KW-0406">Ion transport</keyword>
<keyword id="KW-0449">Lipoprotein</keyword>
<keyword id="KW-0472">Membrane</keyword>
<keyword id="KW-0564">Palmitate</keyword>
<keyword id="KW-0630">Potassium</keyword>
<keyword id="KW-0631">Potassium channel</keyword>
<keyword id="KW-0633">Potassium transport</keyword>
<keyword id="KW-1267">Proteomics identification</keyword>
<keyword id="KW-1185">Reference proteome</keyword>
<keyword id="KW-0812">Transmembrane</keyword>
<keyword id="KW-1133">Transmembrane helix</keyword>
<keyword id="KW-0813">Transport</keyword>
<keyword id="KW-0851">Voltage-gated channel</keyword>
<reference key="1">
    <citation type="journal article" date="2001" name="Gene">
        <title>Initial isolation and analysis of the human Kv1.7 (KCNA7) gene, a member of the voltage-gated potassium channel gene family.</title>
        <authorList>
            <person name="Kashuba V.I."/>
            <person name="Kvasha S.M."/>
            <person name="Protopopov A.I."/>
            <person name="Gizatullin R.Z."/>
            <person name="Rynditch A.V."/>
            <person name="Wahlestedt C."/>
            <person name="Wasserman W.W."/>
            <person name="Zabarovsky E.R."/>
        </authorList>
    </citation>
    <scope>NUCLEOTIDE SEQUENCE [MRNA]</scope>
    <scope>VARIANT THR-418</scope>
    <scope>TISSUE SPECIFICITY</scope>
    <source>
        <tissue>Heart</tissue>
    </source>
</reference>
<reference key="2">
    <citation type="journal article" date="2002" name="Eur. J. Hum. Genet.">
        <title>Characterisation of the human voltage-gated potassium channel gene, KCNA7, a candidate gene for inherited cardiac disorders, and its exclusion as cause of progressive familial heart block I (PFHBI).</title>
        <authorList>
            <person name="Bardien-Kruger S."/>
            <person name="Wulff H."/>
            <person name="Arieff Z."/>
            <person name="Brink P."/>
            <person name="Chandy K.G."/>
            <person name="Corfield V."/>
        </authorList>
    </citation>
    <scope>NUCLEOTIDE SEQUENCE [MRNA]</scope>
    <scope>VARIANTS ARG-189 AND THR-418</scope>
    <scope>TISSUE SPECIFICITY</scope>
</reference>
<reference key="3">
    <citation type="submission" date="2004-10" db="EMBL/GenBank/DDBJ databases">
        <authorList>
            <person name="Finol-Urdaneta R.K."/>
            <person name="Struever N."/>
            <person name="Terlau H."/>
        </authorList>
    </citation>
    <scope>NUCLEOTIDE SEQUENCE [MRNA]</scope>
    <scope>VARIANT ARG-189</scope>
    <source>
        <tissue>Heart muscle</tissue>
    </source>
</reference>
<name>KCNA7_HUMAN</name>
<sequence>MEPRCPPPCGCCERLVLNVAGLRFETRARTLGRFPDTLLGDPARRGRFYDDARREYFFDRHRPSFDAVLYYYQSGGRLRRPAHVPLDVFLEEVAFYGLGAAALARLREDEGCPVPPERPLPRRAFARQLWLLFEFPESSQAARVLAVVSVLVILVSIVVFCLETLPDFRDDRDGTGLAAAAAAGPFPAPLNGSSQMPGNPPRLPFNDPFFVVETLCICWFSFELLVRLLVCPSKAIFFKNVMNLIDFVAILPYFVALGTELARQRGVGQQAMSLAILRVIRLVRVFRIFKLSRHSKGLQILGQTLRASMRELGLLIFFLFIGVVLFSSAVYFAEVDRVDSHFTSIPESFWWAVVTMTTVGYGDMAPVTVGGKIVGSLCAIAGVLTISLPVPVIVSNFSYFYHRETEGEEAGMFSHVDMQPCGPLEGKANGGLVDGEVPELPPPLWAPPGKHLVTEV</sequence>
<evidence type="ECO:0000250" key="1"/>
<evidence type="ECO:0000250" key="2">
    <source>
        <dbReference type="UniProtKB" id="Q17ST2"/>
    </source>
</evidence>
<evidence type="ECO:0000255" key="3"/>
<evidence type="ECO:0000269" key="4">
    <source>
    </source>
</evidence>
<evidence type="ECO:0000269" key="5">
    <source>
    </source>
</evidence>
<evidence type="ECO:0000269" key="6">
    <source ref="3"/>
</evidence>
<evidence type="ECO:0000305" key="7"/>
<comment type="function">
    <text evidence="2">Mediates the voltage-dependent potassium ion permeability of excitable membranes. Assuming opened or closed conformations in response to the voltage difference across the membrane, the protein forms a potassium-selective channel through which potassium ions may pass in accordance with their electrochemical gradient (By similarity).</text>
</comment>
<comment type="catalytic activity">
    <reaction evidence="2">
        <text>K(+)(in) = K(+)(out)</text>
        <dbReference type="Rhea" id="RHEA:29463"/>
        <dbReference type="ChEBI" id="CHEBI:29103"/>
    </reaction>
</comment>
<comment type="subunit">
    <text evidence="1">Heterotetramer of potassium channel proteins.</text>
</comment>
<comment type="interaction">
    <interactant intactId="EBI-42485668">
        <id>Q96RP8</id>
    </interactant>
    <interactant intactId="EBI-356498">
        <id>P62258</id>
        <label>YWHAE</label>
    </interactant>
    <organismsDiffer>false</organismsDiffer>
    <experiments>2</experiments>
</comment>
<comment type="subcellular location">
    <subcellularLocation>
        <location evidence="2">Membrane</location>
        <topology evidence="3">Multi-pass membrane protein</topology>
    </subcellularLocation>
</comment>
<comment type="tissue specificity">
    <text evidence="4 5">Highly expressed in skeletal muscle, heart and kidney.</text>
</comment>
<comment type="domain">
    <text evidence="1">The N-terminus may be important in determining the rate of inactivation of the channel while the tail may play a role in modulation of channel activity and/or targeting of the channel to specific subcellular compartments.</text>
</comment>
<comment type="domain">
    <text evidence="1">The segment S4 is probably the voltage-sensor and is characterized by a series of positively charged amino acids at every third position.</text>
</comment>
<comment type="similarity">
    <text evidence="7">Belongs to the potassium channel family. A (Shaker) (TC 1.A.1.2) subfamily. Kv1.7/KCNA7 sub-subfamily.</text>
</comment>
<accession>Q96RP8</accession>
<accession>A1KYX7</accession>
<accession>Q9BYS4</accession>
<dbReference type="EMBL" id="AJ310479">
    <property type="protein sequence ID" value="CAC29065.1"/>
    <property type="molecule type" value="mRNA"/>
</dbReference>
<dbReference type="EMBL" id="AF315818">
    <property type="protein sequence ID" value="AAK63002.1"/>
    <property type="molecule type" value="mRNA"/>
</dbReference>
<dbReference type="EMBL" id="AY779768">
    <property type="protein sequence ID" value="AAX11186.1"/>
    <property type="molecule type" value="mRNA"/>
</dbReference>
<dbReference type="CCDS" id="CCDS12755.1"/>
<dbReference type="RefSeq" id="NP_114092.2">
    <property type="nucleotide sequence ID" value="NM_031886.2"/>
</dbReference>
<dbReference type="SMR" id="Q96RP8"/>
<dbReference type="FunCoup" id="Q96RP8">
    <property type="interactions" value="28"/>
</dbReference>
<dbReference type="IntAct" id="Q96RP8">
    <property type="interactions" value="2"/>
</dbReference>
<dbReference type="STRING" id="9606.ENSP00000221444"/>
<dbReference type="ChEMBL" id="CHEMBL2773"/>
<dbReference type="DrugBank" id="DB06637">
    <property type="generic name" value="Dalfampridine"/>
</dbReference>
<dbReference type="DrugCentral" id="Q96RP8"/>
<dbReference type="GuidetoPHARMACOLOGY" id="544"/>
<dbReference type="GlyCosmos" id="Q96RP8">
    <property type="glycosylation" value="1 site, No reported glycans"/>
</dbReference>
<dbReference type="GlyGen" id="Q96RP8">
    <property type="glycosylation" value="1 site"/>
</dbReference>
<dbReference type="iPTMnet" id="Q96RP8"/>
<dbReference type="PhosphoSitePlus" id="Q96RP8"/>
<dbReference type="BioMuta" id="KCNA7"/>
<dbReference type="DMDM" id="74752109"/>
<dbReference type="MassIVE" id="Q96RP8"/>
<dbReference type="PaxDb" id="9606-ENSP00000221444"/>
<dbReference type="PeptideAtlas" id="Q96RP8"/>
<dbReference type="Antibodypedia" id="18500">
    <property type="antibodies" value="74 antibodies from 22 providers"/>
</dbReference>
<dbReference type="DNASU" id="3743"/>
<dbReference type="Ensembl" id="ENST00000221444.2">
    <property type="protein sequence ID" value="ENSP00000221444.1"/>
    <property type="gene ID" value="ENSG00000104848.2"/>
</dbReference>
<dbReference type="GeneID" id="3743"/>
<dbReference type="KEGG" id="hsa:3743"/>
<dbReference type="MANE-Select" id="ENST00000221444.2">
    <property type="protein sequence ID" value="ENSP00000221444.1"/>
    <property type="RefSeq nucleotide sequence ID" value="NM_031886.3"/>
    <property type="RefSeq protein sequence ID" value="NP_114092.2"/>
</dbReference>
<dbReference type="UCSC" id="uc002pmg.3">
    <property type="organism name" value="human"/>
</dbReference>
<dbReference type="AGR" id="HGNC:6226"/>
<dbReference type="CTD" id="3743"/>
<dbReference type="DisGeNET" id="3743"/>
<dbReference type="GeneCards" id="KCNA7"/>
<dbReference type="HGNC" id="HGNC:6226">
    <property type="gene designation" value="KCNA7"/>
</dbReference>
<dbReference type="HPA" id="ENSG00000104848">
    <property type="expression patterns" value="Group enriched (skeletal muscle, tongue)"/>
</dbReference>
<dbReference type="MIM" id="176268">
    <property type="type" value="gene"/>
</dbReference>
<dbReference type="neXtProt" id="NX_Q96RP8"/>
<dbReference type="OpenTargets" id="ENSG00000104848"/>
<dbReference type="PharmGKB" id="PA30023"/>
<dbReference type="VEuPathDB" id="HostDB:ENSG00000104848"/>
<dbReference type="eggNOG" id="KOG1545">
    <property type="taxonomic scope" value="Eukaryota"/>
</dbReference>
<dbReference type="GeneTree" id="ENSGT00940000162339"/>
<dbReference type="HOGENOM" id="CLU_011722_4_1_1"/>
<dbReference type="InParanoid" id="Q96RP8"/>
<dbReference type="OMA" id="MPFDDPF"/>
<dbReference type="OrthoDB" id="415460at2759"/>
<dbReference type="PAN-GO" id="Q96RP8">
    <property type="GO annotations" value="4 GO annotations based on evolutionary models"/>
</dbReference>
<dbReference type="PhylomeDB" id="Q96RP8"/>
<dbReference type="TreeFam" id="TF313103"/>
<dbReference type="PathwayCommons" id="Q96RP8"/>
<dbReference type="Reactome" id="R-HSA-1296072">
    <property type="pathway name" value="Voltage gated Potassium channels"/>
</dbReference>
<dbReference type="BioGRID-ORCS" id="3743">
    <property type="hits" value="14 hits in 1151 CRISPR screens"/>
</dbReference>
<dbReference type="GeneWiki" id="KCNA7"/>
<dbReference type="GenomeRNAi" id="3743"/>
<dbReference type="Pharos" id="Q96RP8">
    <property type="development level" value="Tclin"/>
</dbReference>
<dbReference type="PRO" id="PR:Q96RP8"/>
<dbReference type="Proteomes" id="UP000005640">
    <property type="component" value="Chromosome 19"/>
</dbReference>
<dbReference type="RNAct" id="Q96RP8">
    <property type="molecule type" value="protein"/>
</dbReference>
<dbReference type="Bgee" id="ENSG00000104848">
    <property type="expression patterns" value="Expressed in skeletal muscle tissue of rectus abdominis and 34 other cell types or tissues"/>
</dbReference>
<dbReference type="GO" id="GO:0016020">
    <property type="term" value="C:membrane"/>
    <property type="evidence" value="ECO:0000318"/>
    <property type="project" value="GO_Central"/>
</dbReference>
<dbReference type="GO" id="GO:0005886">
    <property type="term" value="C:plasma membrane"/>
    <property type="evidence" value="ECO:0000304"/>
    <property type="project" value="Reactome"/>
</dbReference>
<dbReference type="GO" id="GO:0008076">
    <property type="term" value="C:voltage-gated potassium channel complex"/>
    <property type="evidence" value="ECO:0000318"/>
    <property type="project" value="GO_Central"/>
</dbReference>
<dbReference type="GO" id="GO:0005251">
    <property type="term" value="F:delayed rectifier potassium channel activity"/>
    <property type="evidence" value="ECO:0000318"/>
    <property type="project" value="GO_Central"/>
</dbReference>
<dbReference type="GO" id="GO:0001508">
    <property type="term" value="P:action potential"/>
    <property type="evidence" value="ECO:0000318"/>
    <property type="project" value="GO_Central"/>
</dbReference>
<dbReference type="GO" id="GO:0071805">
    <property type="term" value="P:potassium ion transmembrane transport"/>
    <property type="evidence" value="ECO:0000318"/>
    <property type="project" value="GO_Central"/>
</dbReference>
<dbReference type="GO" id="GO:0051260">
    <property type="term" value="P:protein homooligomerization"/>
    <property type="evidence" value="ECO:0007669"/>
    <property type="project" value="InterPro"/>
</dbReference>
<dbReference type="CDD" id="cd18408">
    <property type="entry name" value="BTB_POZ_KCNA7"/>
    <property type="match status" value="1"/>
</dbReference>
<dbReference type="FunFam" id="1.10.287.70:FF:000002">
    <property type="entry name" value="Potassium voltage-gated channel subfamily a member"/>
    <property type="match status" value="1"/>
</dbReference>
<dbReference type="FunFam" id="1.20.120.350:FF:000028">
    <property type="entry name" value="Potassium voltage-gated channel subfamily a member"/>
    <property type="match status" value="1"/>
</dbReference>
<dbReference type="FunFam" id="3.30.710.10:FF:000122">
    <property type="entry name" value="potassium voltage-gated channel subfamily A member 7"/>
    <property type="match status" value="1"/>
</dbReference>
<dbReference type="Gene3D" id="1.10.287.70">
    <property type="match status" value="1"/>
</dbReference>
<dbReference type="Gene3D" id="3.30.710.10">
    <property type="entry name" value="Potassium Channel Kv1.1, Chain A"/>
    <property type="match status" value="1"/>
</dbReference>
<dbReference type="Gene3D" id="1.20.120.350">
    <property type="entry name" value="Voltage-gated potassium channels. Chain C"/>
    <property type="match status" value="1"/>
</dbReference>
<dbReference type="InterPro" id="IPR000210">
    <property type="entry name" value="BTB/POZ_dom"/>
</dbReference>
<dbReference type="InterPro" id="IPR005821">
    <property type="entry name" value="Ion_trans_dom"/>
</dbReference>
<dbReference type="InterPro" id="IPR003968">
    <property type="entry name" value="K_chnl_volt-dep_Kv"/>
</dbReference>
<dbReference type="InterPro" id="IPR003972">
    <property type="entry name" value="K_chnl_volt-dep_Kv1"/>
</dbReference>
<dbReference type="InterPro" id="IPR048219">
    <property type="entry name" value="KCNA7_BTB_POZ"/>
</dbReference>
<dbReference type="InterPro" id="IPR011333">
    <property type="entry name" value="SKP1/BTB/POZ_sf"/>
</dbReference>
<dbReference type="InterPro" id="IPR003131">
    <property type="entry name" value="T1-type_BTB"/>
</dbReference>
<dbReference type="InterPro" id="IPR028325">
    <property type="entry name" value="VG_K_chnl"/>
</dbReference>
<dbReference type="InterPro" id="IPR027359">
    <property type="entry name" value="Volt_channel_dom_sf"/>
</dbReference>
<dbReference type="PANTHER" id="PTHR11537:SF155">
    <property type="entry name" value="POTASSIUM VOLTAGE-GATED CHANNEL SUBFAMILY A MEMBER 7"/>
    <property type="match status" value="1"/>
</dbReference>
<dbReference type="PANTHER" id="PTHR11537">
    <property type="entry name" value="VOLTAGE-GATED POTASSIUM CHANNEL"/>
    <property type="match status" value="1"/>
</dbReference>
<dbReference type="Pfam" id="PF02214">
    <property type="entry name" value="BTB_2"/>
    <property type="match status" value="1"/>
</dbReference>
<dbReference type="Pfam" id="PF00520">
    <property type="entry name" value="Ion_trans"/>
    <property type="match status" value="1"/>
</dbReference>
<dbReference type="PRINTS" id="PR00169">
    <property type="entry name" value="KCHANNEL"/>
</dbReference>
<dbReference type="PRINTS" id="PR01491">
    <property type="entry name" value="KVCHANNEL"/>
</dbReference>
<dbReference type="PRINTS" id="PR01496">
    <property type="entry name" value="SHAKERCHANEL"/>
</dbReference>
<dbReference type="SMART" id="SM00225">
    <property type="entry name" value="BTB"/>
    <property type="match status" value="1"/>
</dbReference>
<dbReference type="SUPFAM" id="SSF54695">
    <property type="entry name" value="POZ domain"/>
    <property type="match status" value="1"/>
</dbReference>
<dbReference type="SUPFAM" id="SSF81324">
    <property type="entry name" value="Voltage-gated potassium channels"/>
    <property type="match status" value="1"/>
</dbReference>
<gene>
    <name type="primary">KCNA7</name>
</gene>
<protein>
    <recommendedName>
        <fullName>Potassium voltage-gated channel subfamily A member 7</fullName>
    </recommendedName>
    <alternativeName>
        <fullName>Voltage-gated potassium channel subunit Kv1.7</fullName>
    </alternativeName>
</protein>
<organism>
    <name type="scientific">Homo sapiens</name>
    <name type="common">Human</name>
    <dbReference type="NCBI Taxonomy" id="9606"/>
    <lineage>
        <taxon>Eukaryota</taxon>
        <taxon>Metazoa</taxon>
        <taxon>Chordata</taxon>
        <taxon>Craniata</taxon>
        <taxon>Vertebrata</taxon>
        <taxon>Euteleostomi</taxon>
        <taxon>Mammalia</taxon>
        <taxon>Eutheria</taxon>
        <taxon>Euarchontoglires</taxon>
        <taxon>Primates</taxon>
        <taxon>Haplorrhini</taxon>
        <taxon>Catarrhini</taxon>
        <taxon>Hominidae</taxon>
        <taxon>Homo</taxon>
    </lineage>
</organism>